<keyword id="KW-0030">Aminoacyl-tRNA synthetase</keyword>
<keyword id="KW-0067">ATP-binding</keyword>
<keyword id="KW-0963">Cytoplasm</keyword>
<keyword id="KW-0436">Ligase</keyword>
<keyword id="KW-0547">Nucleotide-binding</keyword>
<keyword id="KW-0648">Protein biosynthesis</keyword>
<feature type="chain" id="PRO_1000211898" description="Asparagine--tRNA ligase">
    <location>
        <begin position="1"/>
        <end position="467"/>
    </location>
</feature>
<protein>
    <recommendedName>
        <fullName evidence="1">Asparagine--tRNA ligase</fullName>
        <ecNumber evidence="1">6.1.1.22</ecNumber>
    </recommendedName>
    <alternativeName>
        <fullName evidence="1">Asparaginyl-tRNA synthetase</fullName>
        <shortName evidence="1">AsnRS</shortName>
    </alternativeName>
</protein>
<accession>B0BNV4</accession>
<name>SYN_ACTPJ</name>
<gene>
    <name evidence="1" type="primary">asnS</name>
    <name type="ordered locus">APJL_0670</name>
</gene>
<proteinExistence type="inferred from homology"/>
<evidence type="ECO:0000255" key="1">
    <source>
        <dbReference type="HAMAP-Rule" id="MF_00534"/>
    </source>
</evidence>
<reference key="1">
    <citation type="journal article" date="2008" name="PLoS ONE">
        <title>Genome biology of Actinobacillus pleuropneumoniae JL03, an isolate of serotype 3 prevalent in China.</title>
        <authorList>
            <person name="Xu Z."/>
            <person name="Zhou Y."/>
            <person name="Li L."/>
            <person name="Zhou R."/>
            <person name="Xiao S."/>
            <person name="Wan Y."/>
            <person name="Zhang S."/>
            <person name="Wang K."/>
            <person name="Li W."/>
            <person name="Li L."/>
            <person name="Jin H."/>
            <person name="Kang M."/>
            <person name="Dalai B."/>
            <person name="Li T."/>
            <person name="Liu L."/>
            <person name="Cheng Y."/>
            <person name="Zhang L."/>
            <person name="Xu T."/>
            <person name="Zheng H."/>
            <person name="Pu S."/>
            <person name="Wang B."/>
            <person name="Gu W."/>
            <person name="Zhang X.L."/>
            <person name="Zhu G.-F."/>
            <person name="Wang S."/>
            <person name="Zhao G.-P."/>
            <person name="Chen H."/>
        </authorList>
    </citation>
    <scope>NUCLEOTIDE SEQUENCE [LARGE SCALE GENOMIC DNA]</scope>
    <source>
        <strain>JL03</strain>
    </source>
</reference>
<dbReference type="EC" id="6.1.1.22" evidence="1"/>
<dbReference type="EMBL" id="CP000687">
    <property type="protein sequence ID" value="ABY69239.1"/>
    <property type="molecule type" value="Genomic_DNA"/>
</dbReference>
<dbReference type="RefSeq" id="WP_005600855.1">
    <property type="nucleotide sequence ID" value="NC_010278.1"/>
</dbReference>
<dbReference type="SMR" id="B0BNV4"/>
<dbReference type="KEGG" id="apj:APJL_0670"/>
<dbReference type="HOGENOM" id="CLU_004553_2_0_6"/>
<dbReference type="Proteomes" id="UP000008547">
    <property type="component" value="Chromosome"/>
</dbReference>
<dbReference type="GO" id="GO:0005737">
    <property type="term" value="C:cytoplasm"/>
    <property type="evidence" value="ECO:0007669"/>
    <property type="project" value="UniProtKB-SubCell"/>
</dbReference>
<dbReference type="GO" id="GO:0004816">
    <property type="term" value="F:asparagine-tRNA ligase activity"/>
    <property type="evidence" value="ECO:0007669"/>
    <property type="project" value="UniProtKB-UniRule"/>
</dbReference>
<dbReference type="GO" id="GO:0005524">
    <property type="term" value="F:ATP binding"/>
    <property type="evidence" value="ECO:0007669"/>
    <property type="project" value="UniProtKB-UniRule"/>
</dbReference>
<dbReference type="GO" id="GO:0003676">
    <property type="term" value="F:nucleic acid binding"/>
    <property type="evidence" value="ECO:0007669"/>
    <property type="project" value="InterPro"/>
</dbReference>
<dbReference type="GO" id="GO:0006421">
    <property type="term" value="P:asparaginyl-tRNA aminoacylation"/>
    <property type="evidence" value="ECO:0007669"/>
    <property type="project" value="UniProtKB-UniRule"/>
</dbReference>
<dbReference type="CDD" id="cd00776">
    <property type="entry name" value="AsxRS_core"/>
    <property type="match status" value="1"/>
</dbReference>
<dbReference type="CDD" id="cd04318">
    <property type="entry name" value="EcAsnRS_like_N"/>
    <property type="match status" value="1"/>
</dbReference>
<dbReference type="FunFam" id="3.30.930.10:FF:000016">
    <property type="entry name" value="Asparagine--tRNA ligase"/>
    <property type="match status" value="1"/>
</dbReference>
<dbReference type="Gene3D" id="3.30.930.10">
    <property type="entry name" value="Bira Bifunctional Protein, Domain 2"/>
    <property type="match status" value="1"/>
</dbReference>
<dbReference type="Gene3D" id="2.40.50.140">
    <property type="entry name" value="Nucleic acid-binding proteins"/>
    <property type="match status" value="1"/>
</dbReference>
<dbReference type="HAMAP" id="MF_00534">
    <property type="entry name" value="Asn_tRNA_synth"/>
    <property type="match status" value="1"/>
</dbReference>
<dbReference type="InterPro" id="IPR004364">
    <property type="entry name" value="Aa-tRNA-synt_II"/>
</dbReference>
<dbReference type="InterPro" id="IPR006195">
    <property type="entry name" value="aa-tRNA-synth_II"/>
</dbReference>
<dbReference type="InterPro" id="IPR045864">
    <property type="entry name" value="aa-tRNA-synth_II/BPL/LPL"/>
</dbReference>
<dbReference type="InterPro" id="IPR004522">
    <property type="entry name" value="Asn-tRNA-ligase"/>
</dbReference>
<dbReference type="InterPro" id="IPR002312">
    <property type="entry name" value="Asp/Asn-tRNA-synth_IIb"/>
</dbReference>
<dbReference type="InterPro" id="IPR012340">
    <property type="entry name" value="NA-bd_OB-fold"/>
</dbReference>
<dbReference type="InterPro" id="IPR004365">
    <property type="entry name" value="NA-bd_OB_tRNA"/>
</dbReference>
<dbReference type="NCBIfam" id="TIGR00457">
    <property type="entry name" value="asnS"/>
    <property type="match status" value="1"/>
</dbReference>
<dbReference type="NCBIfam" id="NF003037">
    <property type="entry name" value="PRK03932.1"/>
    <property type="match status" value="1"/>
</dbReference>
<dbReference type="PANTHER" id="PTHR22594:SF34">
    <property type="entry name" value="ASPARAGINE--TRNA LIGASE, MITOCHONDRIAL-RELATED"/>
    <property type="match status" value="1"/>
</dbReference>
<dbReference type="PANTHER" id="PTHR22594">
    <property type="entry name" value="ASPARTYL/LYSYL-TRNA SYNTHETASE"/>
    <property type="match status" value="1"/>
</dbReference>
<dbReference type="Pfam" id="PF00152">
    <property type="entry name" value="tRNA-synt_2"/>
    <property type="match status" value="1"/>
</dbReference>
<dbReference type="Pfam" id="PF01336">
    <property type="entry name" value="tRNA_anti-codon"/>
    <property type="match status" value="1"/>
</dbReference>
<dbReference type="PRINTS" id="PR01042">
    <property type="entry name" value="TRNASYNTHASP"/>
</dbReference>
<dbReference type="SUPFAM" id="SSF55681">
    <property type="entry name" value="Class II aaRS and biotin synthetases"/>
    <property type="match status" value="1"/>
</dbReference>
<dbReference type="SUPFAM" id="SSF50249">
    <property type="entry name" value="Nucleic acid-binding proteins"/>
    <property type="match status" value="1"/>
</dbReference>
<dbReference type="PROSITE" id="PS50862">
    <property type="entry name" value="AA_TRNA_LIGASE_II"/>
    <property type="match status" value="1"/>
</dbReference>
<comment type="catalytic activity">
    <reaction evidence="1">
        <text>tRNA(Asn) + L-asparagine + ATP = L-asparaginyl-tRNA(Asn) + AMP + diphosphate + H(+)</text>
        <dbReference type="Rhea" id="RHEA:11180"/>
        <dbReference type="Rhea" id="RHEA-COMP:9659"/>
        <dbReference type="Rhea" id="RHEA-COMP:9674"/>
        <dbReference type="ChEBI" id="CHEBI:15378"/>
        <dbReference type="ChEBI" id="CHEBI:30616"/>
        <dbReference type="ChEBI" id="CHEBI:33019"/>
        <dbReference type="ChEBI" id="CHEBI:58048"/>
        <dbReference type="ChEBI" id="CHEBI:78442"/>
        <dbReference type="ChEBI" id="CHEBI:78515"/>
        <dbReference type="ChEBI" id="CHEBI:456215"/>
        <dbReference type="EC" id="6.1.1.22"/>
    </reaction>
</comment>
<comment type="subunit">
    <text evidence="1">Homodimer.</text>
</comment>
<comment type="subcellular location">
    <subcellularLocation>
        <location evidence="1">Cytoplasm</location>
    </subcellularLocation>
</comment>
<comment type="similarity">
    <text evidence="1">Belongs to the class-II aminoacyl-tRNA synthetase family.</text>
</comment>
<organism>
    <name type="scientific">Actinobacillus pleuropneumoniae serotype 3 (strain JL03)</name>
    <dbReference type="NCBI Taxonomy" id="434271"/>
    <lineage>
        <taxon>Bacteria</taxon>
        <taxon>Pseudomonadati</taxon>
        <taxon>Pseudomonadota</taxon>
        <taxon>Gammaproteobacteria</taxon>
        <taxon>Pasteurellales</taxon>
        <taxon>Pasteurellaceae</taxon>
        <taxon>Actinobacillus</taxon>
    </lineage>
</organism>
<sequence>MSKFPTVSEILSGKVAVGEEVAVRGWVRTRRDSKAGLSFLAVYDGSCFDPLQSIINNDLANYNDEVLRLTAGCSVIVTGKVVESPAEGQAVELHATHVEVVGWVEDPDTYPMAAKRHSIEYLREVAHLRPRTNLIGAVARVRHCLAQAIHRFFNEQGFYWVATPLITASDTEGAGEMFRVSTLDLESLPRTDEGKVDFSQDFFGKESFLTVSGQLNGETYACALSKVYTFGPTFRAENSNTTRHLAEFWMVEPEFAFATLADNAKLAEDMLKYVFKAVLEERKDDMQFFAKHIDKDVITRLENFIASPFAQVDYTDAIEILLKSGKEFEFPVSWGIDLSSEHERFLAEEYFKSPVVVKNYPKDIKAFYMRLNDDGKTVAAMDVLAPGIGEIIGGSQREERLDVLDTRMVEMGLNPEDYWWYRDLRKYGTVPHSGFGLGFERLIVYVTGLQNIREVIPFPRAPRNANF</sequence>